<gene>
    <name evidence="1" type="primary">dtd</name>
    <name type="ordered locus">gbs1927</name>
</gene>
<accession>P63997</accession>
<accession>Q8DXB3</accession>
<accession>Q8E336</accession>
<keyword id="KW-0963">Cytoplasm</keyword>
<keyword id="KW-0378">Hydrolase</keyword>
<keyword id="KW-0694">RNA-binding</keyword>
<keyword id="KW-0820">tRNA-binding</keyword>
<reference key="1">
    <citation type="journal article" date="2002" name="Mol. Microbiol.">
        <title>Genome sequence of Streptococcus agalactiae, a pathogen causing invasive neonatal disease.</title>
        <authorList>
            <person name="Glaser P."/>
            <person name="Rusniok C."/>
            <person name="Buchrieser C."/>
            <person name="Chevalier F."/>
            <person name="Frangeul L."/>
            <person name="Msadek T."/>
            <person name="Zouine M."/>
            <person name="Couve E."/>
            <person name="Lalioui L."/>
            <person name="Poyart C."/>
            <person name="Trieu-Cuot P."/>
            <person name="Kunst F."/>
        </authorList>
    </citation>
    <scope>NUCLEOTIDE SEQUENCE [LARGE SCALE GENOMIC DNA]</scope>
    <source>
        <strain>NEM316</strain>
    </source>
</reference>
<feature type="chain" id="PRO_0000164594" description="D-aminoacyl-tRNA deacylase">
    <location>
        <begin position="1"/>
        <end position="147"/>
    </location>
</feature>
<feature type="short sequence motif" description="Gly-cisPro motif, important for rejection of L-amino acids" evidence="1">
    <location>
        <begin position="136"/>
        <end position="137"/>
    </location>
</feature>
<sequence length="147" mass="15993">MKIIIQRVNQASVSIEDDVVGSIEKGLVLLVGIAPEDTTEDIAYAVRKITSMRIFSDDEGKMNLSIQDIKGSVLSISQFTLFADTKKGNRPAFTGAADPVKANQFYDIFNQELANHVSVETGQFGADMQVSLINDGPVTIVLDTKNK</sequence>
<protein>
    <recommendedName>
        <fullName evidence="1">D-aminoacyl-tRNA deacylase</fullName>
        <shortName evidence="1">DTD</shortName>
        <ecNumber evidence="1">3.1.1.96</ecNumber>
    </recommendedName>
    <alternativeName>
        <fullName evidence="1">Gly-tRNA(Ala) deacylase</fullName>
    </alternativeName>
</protein>
<dbReference type="EC" id="3.1.1.96" evidence="1"/>
<dbReference type="EMBL" id="AL766854">
    <property type="protein sequence ID" value="CAD47586.1"/>
    <property type="molecule type" value="Genomic_DNA"/>
</dbReference>
<dbReference type="RefSeq" id="WP_000691430.1">
    <property type="nucleotide sequence ID" value="NC_004368.1"/>
</dbReference>
<dbReference type="SMR" id="P63997"/>
<dbReference type="KEGG" id="san:gbs1927"/>
<dbReference type="eggNOG" id="COG1490">
    <property type="taxonomic scope" value="Bacteria"/>
</dbReference>
<dbReference type="HOGENOM" id="CLU_076901_1_0_9"/>
<dbReference type="Proteomes" id="UP000000823">
    <property type="component" value="Chromosome"/>
</dbReference>
<dbReference type="GO" id="GO:0005737">
    <property type="term" value="C:cytoplasm"/>
    <property type="evidence" value="ECO:0007669"/>
    <property type="project" value="UniProtKB-SubCell"/>
</dbReference>
<dbReference type="GO" id="GO:0051500">
    <property type="term" value="F:D-tyrosyl-tRNA(Tyr) deacylase activity"/>
    <property type="evidence" value="ECO:0007669"/>
    <property type="project" value="TreeGrafter"/>
</dbReference>
<dbReference type="GO" id="GO:0106026">
    <property type="term" value="F:Gly-tRNA(Ala) deacylase activity"/>
    <property type="evidence" value="ECO:0007669"/>
    <property type="project" value="UniProtKB-UniRule"/>
</dbReference>
<dbReference type="GO" id="GO:0043908">
    <property type="term" value="F:Ser(Gly)-tRNA(Ala) hydrolase activity"/>
    <property type="evidence" value="ECO:0007669"/>
    <property type="project" value="UniProtKB-UniRule"/>
</dbReference>
<dbReference type="GO" id="GO:0000049">
    <property type="term" value="F:tRNA binding"/>
    <property type="evidence" value="ECO:0007669"/>
    <property type="project" value="UniProtKB-UniRule"/>
</dbReference>
<dbReference type="GO" id="GO:0019478">
    <property type="term" value="P:D-amino acid catabolic process"/>
    <property type="evidence" value="ECO:0007669"/>
    <property type="project" value="UniProtKB-UniRule"/>
</dbReference>
<dbReference type="CDD" id="cd00563">
    <property type="entry name" value="Dtyr_deacylase"/>
    <property type="match status" value="1"/>
</dbReference>
<dbReference type="FunFam" id="3.50.80.10:FF:000001">
    <property type="entry name" value="D-aminoacyl-tRNA deacylase"/>
    <property type="match status" value="1"/>
</dbReference>
<dbReference type="Gene3D" id="3.50.80.10">
    <property type="entry name" value="D-tyrosyl-tRNA(Tyr) deacylase"/>
    <property type="match status" value="1"/>
</dbReference>
<dbReference type="HAMAP" id="MF_00518">
    <property type="entry name" value="Deacylase_Dtd"/>
    <property type="match status" value="1"/>
</dbReference>
<dbReference type="InterPro" id="IPR003732">
    <property type="entry name" value="Daa-tRNA_deacyls_DTD"/>
</dbReference>
<dbReference type="InterPro" id="IPR023509">
    <property type="entry name" value="DTD-like_sf"/>
</dbReference>
<dbReference type="NCBIfam" id="TIGR00256">
    <property type="entry name" value="D-aminoacyl-tRNA deacylase"/>
    <property type="match status" value="1"/>
</dbReference>
<dbReference type="PANTHER" id="PTHR10472:SF5">
    <property type="entry name" value="D-AMINOACYL-TRNA DEACYLASE 1"/>
    <property type="match status" value="1"/>
</dbReference>
<dbReference type="PANTHER" id="PTHR10472">
    <property type="entry name" value="D-TYROSYL-TRNA TYR DEACYLASE"/>
    <property type="match status" value="1"/>
</dbReference>
<dbReference type="Pfam" id="PF02580">
    <property type="entry name" value="Tyr_Deacylase"/>
    <property type="match status" value="1"/>
</dbReference>
<dbReference type="SUPFAM" id="SSF69500">
    <property type="entry name" value="DTD-like"/>
    <property type="match status" value="1"/>
</dbReference>
<name>DTD_STRA3</name>
<evidence type="ECO:0000255" key="1">
    <source>
        <dbReference type="HAMAP-Rule" id="MF_00518"/>
    </source>
</evidence>
<organism>
    <name type="scientific">Streptococcus agalactiae serotype III (strain NEM316)</name>
    <dbReference type="NCBI Taxonomy" id="211110"/>
    <lineage>
        <taxon>Bacteria</taxon>
        <taxon>Bacillati</taxon>
        <taxon>Bacillota</taxon>
        <taxon>Bacilli</taxon>
        <taxon>Lactobacillales</taxon>
        <taxon>Streptococcaceae</taxon>
        <taxon>Streptococcus</taxon>
    </lineage>
</organism>
<comment type="function">
    <text evidence="1">An aminoacyl-tRNA editing enzyme that deacylates mischarged D-aminoacyl-tRNAs. Also deacylates mischarged glycyl-tRNA(Ala), protecting cells against glycine mischarging by AlaRS. Acts via tRNA-based rather than protein-based catalysis; rejects L-amino acids rather than detecting D-amino acids in the active site. By recycling D-aminoacyl-tRNA to D-amino acids and free tRNA molecules, this enzyme counteracts the toxicity associated with the formation of D-aminoacyl-tRNA entities in vivo and helps enforce protein L-homochirality.</text>
</comment>
<comment type="catalytic activity">
    <reaction evidence="1">
        <text>glycyl-tRNA(Ala) + H2O = tRNA(Ala) + glycine + H(+)</text>
        <dbReference type="Rhea" id="RHEA:53744"/>
        <dbReference type="Rhea" id="RHEA-COMP:9657"/>
        <dbReference type="Rhea" id="RHEA-COMP:13640"/>
        <dbReference type="ChEBI" id="CHEBI:15377"/>
        <dbReference type="ChEBI" id="CHEBI:15378"/>
        <dbReference type="ChEBI" id="CHEBI:57305"/>
        <dbReference type="ChEBI" id="CHEBI:78442"/>
        <dbReference type="ChEBI" id="CHEBI:78522"/>
        <dbReference type="EC" id="3.1.1.96"/>
    </reaction>
</comment>
<comment type="catalytic activity">
    <reaction evidence="1">
        <text>a D-aminoacyl-tRNA + H2O = a tRNA + a D-alpha-amino acid + H(+)</text>
        <dbReference type="Rhea" id="RHEA:13953"/>
        <dbReference type="Rhea" id="RHEA-COMP:10123"/>
        <dbReference type="Rhea" id="RHEA-COMP:10124"/>
        <dbReference type="ChEBI" id="CHEBI:15377"/>
        <dbReference type="ChEBI" id="CHEBI:15378"/>
        <dbReference type="ChEBI" id="CHEBI:59871"/>
        <dbReference type="ChEBI" id="CHEBI:78442"/>
        <dbReference type="ChEBI" id="CHEBI:79333"/>
        <dbReference type="EC" id="3.1.1.96"/>
    </reaction>
</comment>
<comment type="subunit">
    <text evidence="1">Homodimer.</text>
</comment>
<comment type="subcellular location">
    <subcellularLocation>
        <location evidence="1">Cytoplasm</location>
    </subcellularLocation>
</comment>
<comment type="domain">
    <text evidence="1">A Gly-cisPro motif from one monomer fits into the active site of the other monomer to allow specific chiral rejection of L-amino acids.</text>
</comment>
<comment type="similarity">
    <text evidence="1">Belongs to the DTD family.</text>
</comment>
<proteinExistence type="inferred from homology"/>